<proteinExistence type="inferred from homology"/>
<accession>P54354</accession>
<keyword id="KW-0028">Amino-acid biosynthesis</keyword>
<keyword id="KW-0100">Branched-chain amino acid biosynthesis</keyword>
<keyword id="KW-0963">Cytoplasm</keyword>
<keyword id="KW-0432">Leucine biosynthesis</keyword>
<keyword id="KW-0460">Magnesium</keyword>
<keyword id="KW-0464">Manganese</keyword>
<keyword id="KW-0479">Metal-binding</keyword>
<keyword id="KW-0520">NAD</keyword>
<keyword id="KW-0560">Oxidoreductase</keyword>
<organism>
    <name type="scientific">Bacteroides fragilis (strain YCH46)</name>
    <dbReference type="NCBI Taxonomy" id="295405"/>
    <lineage>
        <taxon>Bacteria</taxon>
        <taxon>Pseudomonadati</taxon>
        <taxon>Bacteroidota</taxon>
        <taxon>Bacteroidia</taxon>
        <taxon>Bacteroidales</taxon>
        <taxon>Bacteroidaceae</taxon>
        <taxon>Bacteroides</taxon>
    </lineage>
</organism>
<feature type="chain" id="PRO_0000083644" description="3-isopropylmalate dehydrogenase">
    <location>
        <begin position="1"/>
        <end position="353"/>
    </location>
</feature>
<feature type="binding site" evidence="1">
    <location>
        <position position="97"/>
    </location>
    <ligand>
        <name>substrate</name>
    </ligand>
</feature>
<feature type="binding site" evidence="1">
    <location>
        <position position="107"/>
    </location>
    <ligand>
        <name>substrate</name>
    </ligand>
</feature>
<feature type="binding site" evidence="1">
    <location>
        <position position="135"/>
    </location>
    <ligand>
        <name>substrate</name>
    </ligand>
</feature>
<feature type="binding site" evidence="1">
    <location>
        <position position="219"/>
    </location>
    <ligand>
        <name>Mg(2+)</name>
        <dbReference type="ChEBI" id="CHEBI:18420"/>
    </ligand>
</feature>
<feature type="binding site" evidence="1">
    <location>
        <position position="219"/>
    </location>
    <ligand>
        <name>substrate</name>
    </ligand>
</feature>
<feature type="binding site" evidence="1">
    <location>
        <position position="243"/>
    </location>
    <ligand>
        <name>Mg(2+)</name>
        <dbReference type="ChEBI" id="CHEBI:18420"/>
    </ligand>
</feature>
<feature type="binding site" evidence="1">
    <location>
        <position position="247"/>
    </location>
    <ligand>
        <name>Mg(2+)</name>
        <dbReference type="ChEBI" id="CHEBI:18420"/>
    </ligand>
</feature>
<feature type="site" description="Important for catalysis" evidence="1">
    <location>
        <position position="142"/>
    </location>
</feature>
<feature type="site" description="Important for catalysis" evidence="1">
    <location>
        <position position="187"/>
    </location>
</feature>
<evidence type="ECO:0000250" key="1"/>
<evidence type="ECO:0000305" key="2"/>
<name>LEU3_BACFR</name>
<comment type="function">
    <text evidence="1">Catalyzes the oxidation of 3-carboxy-2-hydroxy-4-methylpentanoate (3-isopropylmalate) to 3-carboxy-4-methyl-2-oxopentanoate. The product decarboxylates to 4-methyl-2 oxopentanoate (By similarity).</text>
</comment>
<comment type="catalytic activity">
    <reaction>
        <text>(2R,3S)-3-isopropylmalate + NAD(+) = 4-methyl-2-oxopentanoate + CO2 + NADH</text>
        <dbReference type="Rhea" id="RHEA:32271"/>
        <dbReference type="ChEBI" id="CHEBI:16526"/>
        <dbReference type="ChEBI" id="CHEBI:17865"/>
        <dbReference type="ChEBI" id="CHEBI:35121"/>
        <dbReference type="ChEBI" id="CHEBI:57540"/>
        <dbReference type="ChEBI" id="CHEBI:57945"/>
        <dbReference type="EC" id="1.1.1.85"/>
    </reaction>
</comment>
<comment type="cofactor">
    <cofactor evidence="1">
        <name>Mg(2+)</name>
        <dbReference type="ChEBI" id="CHEBI:18420"/>
    </cofactor>
    <cofactor evidence="1">
        <name>Mn(2+)</name>
        <dbReference type="ChEBI" id="CHEBI:29035"/>
    </cofactor>
    <text evidence="1">Binds 1 Mg(2+) or Mn(2+) ion per subunit.</text>
</comment>
<comment type="pathway">
    <text>Amino-acid biosynthesis; L-leucine biosynthesis; L-leucine from 3-methyl-2-oxobutanoate: step 3/4.</text>
</comment>
<comment type="subunit">
    <text evidence="1">Homodimer.</text>
</comment>
<comment type="subcellular location">
    <subcellularLocation>
        <location evidence="1">Cytoplasm</location>
    </subcellularLocation>
</comment>
<comment type="similarity">
    <text evidence="2">Belongs to the isocitrate and isopropylmalate dehydrogenases family. LeuB type 1 subfamily.</text>
</comment>
<dbReference type="EC" id="1.1.1.85"/>
<dbReference type="EMBL" id="D45169">
    <property type="protein sequence ID" value="BAA08117.1"/>
    <property type="molecule type" value="Genomic_DNA"/>
</dbReference>
<dbReference type="EMBL" id="AP006841">
    <property type="protein sequence ID" value="BAD50187.1"/>
    <property type="molecule type" value="Genomic_DNA"/>
</dbReference>
<dbReference type="PIR" id="I40235">
    <property type="entry name" value="I40235"/>
</dbReference>
<dbReference type="RefSeq" id="WP_005789841.1">
    <property type="nucleotide sequence ID" value="NZ_UYXF01000038.1"/>
</dbReference>
<dbReference type="RefSeq" id="YP_100721.1">
    <property type="nucleotide sequence ID" value="NC_006347.1"/>
</dbReference>
<dbReference type="SMR" id="P54354"/>
<dbReference type="STRING" id="295405.BF3444"/>
<dbReference type="GeneID" id="60367175"/>
<dbReference type="KEGG" id="bfr:BF3444"/>
<dbReference type="PATRIC" id="fig|295405.11.peg.3308"/>
<dbReference type="HOGENOM" id="CLU_031953_0_3_10"/>
<dbReference type="OrthoDB" id="9806254at2"/>
<dbReference type="BRENDA" id="1.1.1.85">
    <property type="organism ID" value="755"/>
</dbReference>
<dbReference type="UniPathway" id="UPA00048">
    <property type="reaction ID" value="UER00072"/>
</dbReference>
<dbReference type="Proteomes" id="UP000002197">
    <property type="component" value="Chromosome"/>
</dbReference>
<dbReference type="GO" id="GO:0005829">
    <property type="term" value="C:cytosol"/>
    <property type="evidence" value="ECO:0007669"/>
    <property type="project" value="TreeGrafter"/>
</dbReference>
<dbReference type="GO" id="GO:0003862">
    <property type="term" value="F:3-isopropylmalate dehydrogenase activity"/>
    <property type="evidence" value="ECO:0007669"/>
    <property type="project" value="UniProtKB-UniRule"/>
</dbReference>
<dbReference type="GO" id="GO:0000287">
    <property type="term" value="F:magnesium ion binding"/>
    <property type="evidence" value="ECO:0007669"/>
    <property type="project" value="InterPro"/>
</dbReference>
<dbReference type="GO" id="GO:0051287">
    <property type="term" value="F:NAD binding"/>
    <property type="evidence" value="ECO:0007669"/>
    <property type="project" value="InterPro"/>
</dbReference>
<dbReference type="GO" id="GO:0009098">
    <property type="term" value="P:L-leucine biosynthetic process"/>
    <property type="evidence" value="ECO:0007669"/>
    <property type="project" value="UniProtKB-UniRule"/>
</dbReference>
<dbReference type="FunFam" id="3.40.718.10:FF:000006">
    <property type="entry name" value="3-isopropylmalate dehydrogenase"/>
    <property type="match status" value="1"/>
</dbReference>
<dbReference type="Gene3D" id="3.40.718.10">
    <property type="entry name" value="Isopropylmalate Dehydrogenase"/>
    <property type="match status" value="1"/>
</dbReference>
<dbReference type="HAMAP" id="MF_01033">
    <property type="entry name" value="LeuB_type1"/>
    <property type="match status" value="1"/>
</dbReference>
<dbReference type="InterPro" id="IPR019818">
    <property type="entry name" value="IsoCit/isopropylmalate_DH_CS"/>
</dbReference>
<dbReference type="InterPro" id="IPR024084">
    <property type="entry name" value="IsoPropMal-DH-like_dom"/>
</dbReference>
<dbReference type="InterPro" id="IPR004429">
    <property type="entry name" value="Isopropylmalate_DH"/>
</dbReference>
<dbReference type="NCBIfam" id="TIGR00169">
    <property type="entry name" value="leuB"/>
    <property type="match status" value="1"/>
</dbReference>
<dbReference type="PANTHER" id="PTHR42979">
    <property type="entry name" value="3-ISOPROPYLMALATE DEHYDROGENASE"/>
    <property type="match status" value="1"/>
</dbReference>
<dbReference type="PANTHER" id="PTHR42979:SF1">
    <property type="entry name" value="3-ISOPROPYLMALATE DEHYDROGENASE"/>
    <property type="match status" value="1"/>
</dbReference>
<dbReference type="Pfam" id="PF00180">
    <property type="entry name" value="Iso_dh"/>
    <property type="match status" value="1"/>
</dbReference>
<dbReference type="SMART" id="SM01329">
    <property type="entry name" value="Iso_dh"/>
    <property type="match status" value="1"/>
</dbReference>
<dbReference type="SUPFAM" id="SSF53659">
    <property type="entry name" value="Isocitrate/Isopropylmalate dehydrogenase-like"/>
    <property type="match status" value="1"/>
</dbReference>
<dbReference type="PROSITE" id="PS00470">
    <property type="entry name" value="IDH_IMDH"/>
    <property type="match status" value="1"/>
</dbReference>
<reference key="1">
    <citation type="journal article" date="1995" name="Microbiol. Immunol.">
        <title>Nucleotide sequence of the gene encoding beta-isopropylmalate dehydrogenase (leuB) from Bacteroides fragilis.</title>
        <authorList>
            <person name="Sarker M.R."/>
            <person name="Akimoto S."/>
            <person name="Ugai H."/>
            <person name="Kuwahara T."/>
            <person name="Ohnishi Y."/>
        </authorList>
    </citation>
    <scope>NUCLEOTIDE SEQUENCE [GENOMIC DNA]</scope>
    <source>
        <strain>YCH46</strain>
    </source>
</reference>
<reference key="2">
    <citation type="journal article" date="2004" name="Proc. Natl. Acad. Sci. U.S.A.">
        <title>Genomic analysis of Bacteroides fragilis reveals extensive DNA inversions regulating cell surface adaptation.</title>
        <authorList>
            <person name="Kuwahara T."/>
            <person name="Yamashita A."/>
            <person name="Hirakawa H."/>
            <person name="Nakayama H."/>
            <person name="Toh H."/>
            <person name="Okada N."/>
            <person name="Kuhara S."/>
            <person name="Hattori M."/>
            <person name="Hayashi T."/>
            <person name="Ohnishi Y."/>
        </authorList>
    </citation>
    <scope>NUCLEOTIDE SEQUENCE [LARGE SCALE GENOMIC DNA]</scope>
    <source>
        <strain>YCH46</strain>
    </source>
</reference>
<sequence>MDFKIAVLAGDGIGPEISVQGVEVMSAVCEKFGHKVNYEYAICGADAIDKVGDPFPEETYRVCKNADAVLFSAVGDPKFDNDPTAKVRPEQGLLAMRKKLGLFANIRPVQTFKCLVHKSPLRAELVEGADFLCIRELTGGMYFGEKYQDNDKAYDTNMYTRPEIERILKVGFEYAMKRRKHLTVVDKANVLASSRLWRQIAQEMAPQYPEVTTDYMFVDNAAMKMIQEPKFFDVMVTENTFGDILTDEGSVISGSMGLLPSASTGESTPVFEPIHGSWPQAKGLNIANPLAQILSVAMLFEYFDCKAEGALIRKAVDASLDANVRTPEIQVEGGEKFGTKEVGAWIVDYIRKA</sequence>
<gene>
    <name type="primary">leuB</name>
    <name type="ordered locus">BF3444</name>
</gene>
<protein>
    <recommendedName>
        <fullName>3-isopropylmalate dehydrogenase</fullName>
        <ecNumber>1.1.1.85</ecNumber>
    </recommendedName>
    <alternativeName>
        <fullName>3-IPM-DH</fullName>
    </alternativeName>
    <alternativeName>
        <fullName>Beta-IPM dehydrogenase</fullName>
        <shortName>IMDH</shortName>
    </alternativeName>
</protein>